<sequence>MWVMQGERRRARAPWGPPDTGGALLERWISRERRSDSRDASGSAKQRSAMGNSLPVESKFTDEKENDRIKYVVSSMQGWGEKMEDAHAAILNLDDTMTSFFGVYDGHGGAEVASYCAKRFHIELCNHEDYDSNLSNAMRSAFYSMDEDLQLSDAWRELVIPRNNGWMYFIKAGVCANLSPFPQATYTAPSYEGSTACVVVIRGDQLIVGHAGDSRCVLSRNGQASALSVDHKPDSESERERVQNAGGVAVGYSYRKIMGRWVTKKQWGFTDFKGRVSISRSIGDFACKKNERLPPEDQMLTCNPDILTMDITDDMEFLVIATEGLWCNMTNQNVVDHTHDRLLEGAEARVICEELVQFGLPSGDNTTVILVLFKPGAFPAVPPVDTDTDTDSHIDDDVDPTGSNNATASDNNDPANEVDPTANAGSDDSNTGDEVKVDATATAVGSSSTTAVAADEGTGNPPHGALVDTDDEDGLTYSQDMDLPPASTSPPTFPDEDDLPRSNPDKSPPHDDTYHRW</sequence>
<dbReference type="EC" id="3.1.3.16"/>
<dbReference type="EMBL" id="AP005385">
    <property type="protein sequence ID" value="BAD22143.1"/>
    <property type="status" value="ALT_SEQ"/>
    <property type="molecule type" value="Genomic_DNA"/>
</dbReference>
<dbReference type="EMBL" id="AP005385">
    <property type="protein sequence ID" value="BAD22144.1"/>
    <property type="status" value="ALT_SEQ"/>
    <property type="molecule type" value="Genomic_DNA"/>
</dbReference>
<dbReference type="EMBL" id="AP005385">
    <property type="protein sequence ID" value="BAD22145.1"/>
    <property type="status" value="ALT_SEQ"/>
    <property type="molecule type" value="Genomic_DNA"/>
</dbReference>
<dbReference type="EMBL" id="AP014958">
    <property type="status" value="NOT_ANNOTATED_CDS"/>
    <property type="molecule type" value="Genomic_DNA"/>
</dbReference>
<dbReference type="SMR" id="Q6K5I0"/>
<dbReference type="FunCoup" id="Q6K5I0">
    <property type="interactions" value="18"/>
</dbReference>
<dbReference type="STRING" id="39947.Q6K5I0"/>
<dbReference type="PaxDb" id="39947-Q6K5I0"/>
<dbReference type="eggNOG" id="KOG0698">
    <property type="taxonomic scope" value="Eukaryota"/>
</dbReference>
<dbReference type="HOGENOM" id="CLU_013173_4_1_1"/>
<dbReference type="InParanoid" id="Q6K5I0"/>
<dbReference type="Proteomes" id="UP000000763">
    <property type="component" value="Chromosome 2"/>
</dbReference>
<dbReference type="Proteomes" id="UP000059680">
    <property type="component" value="Chromosome 2"/>
</dbReference>
<dbReference type="GO" id="GO:0046872">
    <property type="term" value="F:metal ion binding"/>
    <property type="evidence" value="ECO:0007669"/>
    <property type="project" value="UniProtKB-KW"/>
</dbReference>
<dbReference type="GO" id="GO:0004722">
    <property type="term" value="F:protein serine/threonine phosphatase activity"/>
    <property type="evidence" value="ECO:0007669"/>
    <property type="project" value="UniProtKB-EC"/>
</dbReference>
<dbReference type="GO" id="GO:0007165">
    <property type="term" value="P:signal transduction"/>
    <property type="evidence" value="ECO:0000318"/>
    <property type="project" value="GO_Central"/>
</dbReference>
<dbReference type="CDD" id="cd00143">
    <property type="entry name" value="PP2Cc"/>
    <property type="match status" value="1"/>
</dbReference>
<dbReference type="FunFam" id="3.60.40.10:FF:000056">
    <property type="entry name" value="Probable protein phosphatase 2C 18"/>
    <property type="match status" value="1"/>
</dbReference>
<dbReference type="Gene3D" id="3.60.40.10">
    <property type="entry name" value="PPM-type phosphatase domain"/>
    <property type="match status" value="1"/>
</dbReference>
<dbReference type="InterPro" id="IPR015655">
    <property type="entry name" value="PP2C"/>
</dbReference>
<dbReference type="InterPro" id="IPR000222">
    <property type="entry name" value="PP2C_BS"/>
</dbReference>
<dbReference type="InterPro" id="IPR036457">
    <property type="entry name" value="PPM-type-like_dom_sf"/>
</dbReference>
<dbReference type="InterPro" id="IPR001932">
    <property type="entry name" value="PPM-type_phosphatase-like_dom"/>
</dbReference>
<dbReference type="PANTHER" id="PTHR13832">
    <property type="entry name" value="PROTEIN PHOSPHATASE 2C"/>
    <property type="match status" value="1"/>
</dbReference>
<dbReference type="PANTHER" id="PTHR13832:SF285">
    <property type="entry name" value="PROTEIN PHOSPHATASE 2C 22-RELATED"/>
    <property type="match status" value="1"/>
</dbReference>
<dbReference type="Pfam" id="PF00481">
    <property type="entry name" value="PP2C"/>
    <property type="match status" value="2"/>
</dbReference>
<dbReference type="SMART" id="SM00332">
    <property type="entry name" value="PP2Cc"/>
    <property type="match status" value="1"/>
</dbReference>
<dbReference type="SUPFAM" id="SSF81606">
    <property type="entry name" value="PP2C-like"/>
    <property type="match status" value="1"/>
</dbReference>
<dbReference type="PROSITE" id="PS01032">
    <property type="entry name" value="PPM_1"/>
    <property type="match status" value="1"/>
</dbReference>
<dbReference type="PROSITE" id="PS51746">
    <property type="entry name" value="PPM_2"/>
    <property type="match status" value="1"/>
</dbReference>
<reference key="1">
    <citation type="journal article" date="2005" name="Nature">
        <title>The map-based sequence of the rice genome.</title>
        <authorList>
            <consortium name="International rice genome sequencing project (IRGSP)"/>
        </authorList>
    </citation>
    <scope>NUCLEOTIDE SEQUENCE [LARGE SCALE GENOMIC DNA]</scope>
    <source>
        <strain>cv. Nipponbare</strain>
    </source>
</reference>
<reference key="2">
    <citation type="journal article" date="2013" name="Rice">
        <title>Improvement of the Oryza sativa Nipponbare reference genome using next generation sequence and optical map data.</title>
        <authorList>
            <person name="Kawahara Y."/>
            <person name="de la Bastide M."/>
            <person name="Hamilton J.P."/>
            <person name="Kanamori H."/>
            <person name="McCombie W.R."/>
            <person name="Ouyang S."/>
            <person name="Schwartz D.C."/>
            <person name="Tanaka T."/>
            <person name="Wu J."/>
            <person name="Zhou S."/>
            <person name="Childs K.L."/>
            <person name="Davidson R.M."/>
            <person name="Lin H."/>
            <person name="Quesada-Ocampo L."/>
            <person name="Vaillancourt B."/>
            <person name="Sakai H."/>
            <person name="Lee S.S."/>
            <person name="Kim J."/>
            <person name="Numa H."/>
            <person name="Itoh T."/>
            <person name="Buell C.R."/>
            <person name="Matsumoto T."/>
        </authorList>
    </citation>
    <scope>GENOME REANNOTATION</scope>
    <source>
        <strain>cv. Nipponbare</strain>
    </source>
</reference>
<reference key="3">
    <citation type="journal article" date="2008" name="BMC Genomics">
        <title>Genome-wide and expression analysis of protein phosphatase 2C in rice and Arabidopsis.</title>
        <authorList>
            <person name="Xue T."/>
            <person name="Wang D."/>
            <person name="Zhang S."/>
            <person name="Ehlting J."/>
            <person name="Ni F."/>
            <person name="Jacab S."/>
            <person name="Zheng C."/>
            <person name="Zhong Y."/>
        </authorList>
    </citation>
    <scope>GENE FAMILY</scope>
    <scope>NOMENCLATURE</scope>
</reference>
<evidence type="ECO:0000250" key="1"/>
<evidence type="ECO:0000255" key="2">
    <source>
        <dbReference type="PROSITE-ProRule" id="PRU01082"/>
    </source>
</evidence>
<evidence type="ECO:0000256" key="3">
    <source>
        <dbReference type="SAM" id="MobiDB-lite"/>
    </source>
</evidence>
<evidence type="ECO:0000305" key="4"/>
<name>P2C20_ORYSJ</name>
<gene>
    <name type="ordered locus">Os02g0600000</name>
    <name type="ordered locus">LOC_Os02g38804</name>
    <name type="ORF">OJ1791_B03.14</name>
    <name type="ORF">OJ1791_B03.15</name>
</gene>
<protein>
    <recommendedName>
        <fullName>Probable protein phosphatase 2C 20</fullName>
        <shortName>OsPP2C20</shortName>
        <ecNumber>3.1.3.16</ecNumber>
    </recommendedName>
</protein>
<comment type="catalytic activity">
    <reaction>
        <text>O-phospho-L-seryl-[protein] + H2O = L-seryl-[protein] + phosphate</text>
        <dbReference type="Rhea" id="RHEA:20629"/>
        <dbReference type="Rhea" id="RHEA-COMP:9863"/>
        <dbReference type="Rhea" id="RHEA-COMP:11604"/>
        <dbReference type="ChEBI" id="CHEBI:15377"/>
        <dbReference type="ChEBI" id="CHEBI:29999"/>
        <dbReference type="ChEBI" id="CHEBI:43474"/>
        <dbReference type="ChEBI" id="CHEBI:83421"/>
        <dbReference type="EC" id="3.1.3.16"/>
    </reaction>
</comment>
<comment type="catalytic activity">
    <reaction>
        <text>O-phospho-L-threonyl-[protein] + H2O = L-threonyl-[protein] + phosphate</text>
        <dbReference type="Rhea" id="RHEA:47004"/>
        <dbReference type="Rhea" id="RHEA-COMP:11060"/>
        <dbReference type="Rhea" id="RHEA-COMP:11605"/>
        <dbReference type="ChEBI" id="CHEBI:15377"/>
        <dbReference type="ChEBI" id="CHEBI:30013"/>
        <dbReference type="ChEBI" id="CHEBI:43474"/>
        <dbReference type="ChEBI" id="CHEBI:61977"/>
        <dbReference type="EC" id="3.1.3.16"/>
    </reaction>
</comment>
<comment type="cofactor">
    <cofactor evidence="1">
        <name>Mg(2+)</name>
        <dbReference type="ChEBI" id="CHEBI:18420"/>
    </cofactor>
    <cofactor evidence="1">
        <name>Mn(2+)</name>
        <dbReference type="ChEBI" id="CHEBI:29035"/>
    </cofactor>
    <text evidence="1">Binds 2 magnesium or manganese ions per subunit.</text>
</comment>
<comment type="similarity">
    <text evidence="4">Belongs to the PP2C family.</text>
</comment>
<comment type="sequence caution" evidence="4">
    <conflict type="erroneous gene model prediction">
        <sequence resource="EMBL-CDS" id="BAD22143"/>
    </conflict>
</comment>
<comment type="sequence caution" evidence="4">
    <conflict type="erroneous gene model prediction">
        <sequence resource="EMBL-CDS" id="BAD22144"/>
    </conflict>
</comment>
<comment type="sequence caution" evidence="4">
    <conflict type="erroneous gene model prediction">
        <sequence resource="EMBL-CDS" id="BAD22145"/>
    </conflict>
</comment>
<keyword id="KW-0378">Hydrolase</keyword>
<keyword id="KW-0460">Magnesium</keyword>
<keyword id="KW-0464">Manganese</keyword>
<keyword id="KW-0479">Metal-binding</keyword>
<keyword id="KW-0904">Protein phosphatase</keyword>
<keyword id="KW-1185">Reference proteome</keyword>
<accession>Q6K5I0</accession>
<accession>Q6K5I1</accession>
<accession>Q6K5I2</accession>
<proteinExistence type="inferred from homology"/>
<feature type="chain" id="PRO_0000363266" description="Probable protein phosphatase 2C 20">
    <location>
        <begin position="1"/>
        <end position="517"/>
    </location>
</feature>
<feature type="domain" description="PPM-type phosphatase" evidence="2">
    <location>
        <begin position="70"/>
        <end position="373"/>
    </location>
</feature>
<feature type="region of interest" description="Disordered" evidence="3">
    <location>
        <begin position="1"/>
        <end position="59"/>
    </location>
</feature>
<feature type="region of interest" description="Disordered" evidence="3">
    <location>
        <begin position="380"/>
        <end position="517"/>
    </location>
</feature>
<feature type="compositionally biased region" description="Basic and acidic residues" evidence="3">
    <location>
        <begin position="28"/>
        <end position="39"/>
    </location>
</feature>
<feature type="compositionally biased region" description="Polar residues" evidence="3">
    <location>
        <begin position="402"/>
        <end position="414"/>
    </location>
</feature>
<feature type="compositionally biased region" description="Low complexity" evidence="3">
    <location>
        <begin position="438"/>
        <end position="455"/>
    </location>
</feature>
<feature type="compositionally biased region" description="Basic and acidic residues" evidence="3">
    <location>
        <begin position="499"/>
        <end position="517"/>
    </location>
</feature>
<feature type="binding site" evidence="1">
    <location>
        <position position="105"/>
    </location>
    <ligand>
        <name>Mn(2+)</name>
        <dbReference type="ChEBI" id="CHEBI:29035"/>
        <label>1</label>
    </ligand>
</feature>
<feature type="binding site" evidence="1">
    <location>
        <position position="105"/>
    </location>
    <ligand>
        <name>Mn(2+)</name>
        <dbReference type="ChEBI" id="CHEBI:29035"/>
        <label>2</label>
    </ligand>
</feature>
<feature type="binding site" evidence="1">
    <location>
        <position position="106"/>
    </location>
    <ligand>
        <name>Mn(2+)</name>
        <dbReference type="ChEBI" id="CHEBI:29035"/>
        <label>1</label>
    </ligand>
</feature>
<feature type="binding site" evidence="1">
    <location>
        <position position="323"/>
    </location>
    <ligand>
        <name>Mn(2+)</name>
        <dbReference type="ChEBI" id="CHEBI:29035"/>
        <label>2</label>
    </ligand>
</feature>
<feature type="binding site" evidence="1">
    <location>
        <position position="364"/>
    </location>
    <ligand>
        <name>Mn(2+)</name>
        <dbReference type="ChEBI" id="CHEBI:29035"/>
        <label>2</label>
    </ligand>
</feature>
<organism>
    <name type="scientific">Oryza sativa subsp. japonica</name>
    <name type="common">Rice</name>
    <dbReference type="NCBI Taxonomy" id="39947"/>
    <lineage>
        <taxon>Eukaryota</taxon>
        <taxon>Viridiplantae</taxon>
        <taxon>Streptophyta</taxon>
        <taxon>Embryophyta</taxon>
        <taxon>Tracheophyta</taxon>
        <taxon>Spermatophyta</taxon>
        <taxon>Magnoliopsida</taxon>
        <taxon>Liliopsida</taxon>
        <taxon>Poales</taxon>
        <taxon>Poaceae</taxon>
        <taxon>BOP clade</taxon>
        <taxon>Oryzoideae</taxon>
        <taxon>Oryzeae</taxon>
        <taxon>Oryzinae</taxon>
        <taxon>Oryza</taxon>
        <taxon>Oryza sativa</taxon>
    </lineage>
</organism>